<protein>
    <recommendedName>
        <fullName evidence="1">Argininosuccinate synthase</fullName>
        <ecNumber evidence="1">6.3.4.5</ecNumber>
    </recommendedName>
    <alternativeName>
        <fullName evidence="1">Citrulline--aspartate ligase</fullName>
    </alternativeName>
</protein>
<dbReference type="EC" id="6.3.4.5" evidence="1"/>
<dbReference type="EMBL" id="AE015927">
    <property type="protein sequence ID" value="AAO35180.1"/>
    <property type="molecule type" value="Genomic_DNA"/>
</dbReference>
<dbReference type="RefSeq" id="WP_011098846.1">
    <property type="nucleotide sequence ID" value="NC_004557.1"/>
</dbReference>
<dbReference type="SMR" id="P59602"/>
<dbReference type="STRING" id="212717.CTC_00561"/>
<dbReference type="GeneID" id="24252994"/>
<dbReference type="KEGG" id="ctc:CTC_00561"/>
<dbReference type="HOGENOM" id="CLU_032784_4_2_9"/>
<dbReference type="OrthoDB" id="9801641at2"/>
<dbReference type="UniPathway" id="UPA00068">
    <property type="reaction ID" value="UER00113"/>
</dbReference>
<dbReference type="Proteomes" id="UP000001412">
    <property type="component" value="Chromosome"/>
</dbReference>
<dbReference type="GO" id="GO:0005737">
    <property type="term" value="C:cytoplasm"/>
    <property type="evidence" value="ECO:0007669"/>
    <property type="project" value="UniProtKB-SubCell"/>
</dbReference>
<dbReference type="GO" id="GO:0004055">
    <property type="term" value="F:argininosuccinate synthase activity"/>
    <property type="evidence" value="ECO:0007669"/>
    <property type="project" value="UniProtKB-UniRule"/>
</dbReference>
<dbReference type="GO" id="GO:0005524">
    <property type="term" value="F:ATP binding"/>
    <property type="evidence" value="ECO:0007669"/>
    <property type="project" value="UniProtKB-UniRule"/>
</dbReference>
<dbReference type="GO" id="GO:0000053">
    <property type="term" value="P:argininosuccinate metabolic process"/>
    <property type="evidence" value="ECO:0007669"/>
    <property type="project" value="TreeGrafter"/>
</dbReference>
<dbReference type="GO" id="GO:0006526">
    <property type="term" value="P:L-arginine biosynthetic process"/>
    <property type="evidence" value="ECO:0007669"/>
    <property type="project" value="UniProtKB-UniRule"/>
</dbReference>
<dbReference type="GO" id="GO:0000050">
    <property type="term" value="P:urea cycle"/>
    <property type="evidence" value="ECO:0007669"/>
    <property type="project" value="TreeGrafter"/>
</dbReference>
<dbReference type="CDD" id="cd01999">
    <property type="entry name" value="ASS"/>
    <property type="match status" value="1"/>
</dbReference>
<dbReference type="FunFam" id="3.40.50.620:FF:000019">
    <property type="entry name" value="Argininosuccinate synthase"/>
    <property type="match status" value="1"/>
</dbReference>
<dbReference type="FunFam" id="3.90.1260.10:FF:000007">
    <property type="entry name" value="Argininosuccinate synthase"/>
    <property type="match status" value="1"/>
</dbReference>
<dbReference type="Gene3D" id="3.90.1260.10">
    <property type="entry name" value="Argininosuccinate synthetase, chain A, domain 2"/>
    <property type="match status" value="1"/>
</dbReference>
<dbReference type="Gene3D" id="3.40.50.620">
    <property type="entry name" value="HUPs"/>
    <property type="match status" value="1"/>
</dbReference>
<dbReference type="Gene3D" id="1.20.5.470">
    <property type="entry name" value="Single helix bin"/>
    <property type="match status" value="1"/>
</dbReference>
<dbReference type="HAMAP" id="MF_00005">
    <property type="entry name" value="Arg_succ_synth_type1"/>
    <property type="match status" value="1"/>
</dbReference>
<dbReference type="InterPro" id="IPR048268">
    <property type="entry name" value="Arginosuc_syn_C"/>
</dbReference>
<dbReference type="InterPro" id="IPR048267">
    <property type="entry name" value="Arginosuc_syn_N"/>
</dbReference>
<dbReference type="InterPro" id="IPR001518">
    <property type="entry name" value="Arginosuc_synth"/>
</dbReference>
<dbReference type="InterPro" id="IPR018223">
    <property type="entry name" value="Arginosuc_synth_CS"/>
</dbReference>
<dbReference type="InterPro" id="IPR023434">
    <property type="entry name" value="Arginosuc_synth_type_1_subfam"/>
</dbReference>
<dbReference type="InterPro" id="IPR024074">
    <property type="entry name" value="AS_cat/multimer_dom_body"/>
</dbReference>
<dbReference type="InterPro" id="IPR014729">
    <property type="entry name" value="Rossmann-like_a/b/a_fold"/>
</dbReference>
<dbReference type="NCBIfam" id="TIGR00032">
    <property type="entry name" value="argG"/>
    <property type="match status" value="1"/>
</dbReference>
<dbReference type="NCBIfam" id="NF001770">
    <property type="entry name" value="PRK00509.1"/>
    <property type="match status" value="1"/>
</dbReference>
<dbReference type="PANTHER" id="PTHR11587">
    <property type="entry name" value="ARGININOSUCCINATE SYNTHASE"/>
    <property type="match status" value="1"/>
</dbReference>
<dbReference type="PANTHER" id="PTHR11587:SF2">
    <property type="entry name" value="ARGININOSUCCINATE SYNTHASE"/>
    <property type="match status" value="1"/>
</dbReference>
<dbReference type="Pfam" id="PF20979">
    <property type="entry name" value="Arginosuc_syn_C"/>
    <property type="match status" value="1"/>
</dbReference>
<dbReference type="Pfam" id="PF00764">
    <property type="entry name" value="Arginosuc_synth"/>
    <property type="match status" value="1"/>
</dbReference>
<dbReference type="SUPFAM" id="SSF52402">
    <property type="entry name" value="Adenine nucleotide alpha hydrolases-like"/>
    <property type="match status" value="1"/>
</dbReference>
<dbReference type="SUPFAM" id="SSF69864">
    <property type="entry name" value="Argininosuccinate synthetase, C-terminal domain"/>
    <property type="match status" value="1"/>
</dbReference>
<dbReference type="PROSITE" id="PS00564">
    <property type="entry name" value="ARGININOSUCCIN_SYN_1"/>
    <property type="match status" value="1"/>
</dbReference>
<dbReference type="PROSITE" id="PS00565">
    <property type="entry name" value="ARGININOSUCCIN_SYN_2"/>
    <property type="match status" value="1"/>
</dbReference>
<proteinExistence type="inferred from homology"/>
<organism>
    <name type="scientific">Clostridium tetani (strain Massachusetts / E88)</name>
    <dbReference type="NCBI Taxonomy" id="212717"/>
    <lineage>
        <taxon>Bacteria</taxon>
        <taxon>Bacillati</taxon>
        <taxon>Bacillota</taxon>
        <taxon>Clostridia</taxon>
        <taxon>Eubacteriales</taxon>
        <taxon>Clostridiaceae</taxon>
        <taxon>Clostridium</taxon>
    </lineage>
</organism>
<gene>
    <name evidence="1" type="primary">argG</name>
    <name type="ordered locus">CTC_00561</name>
</gene>
<comment type="catalytic activity">
    <reaction evidence="1">
        <text>L-citrulline + L-aspartate + ATP = 2-(N(omega)-L-arginino)succinate + AMP + diphosphate + H(+)</text>
        <dbReference type="Rhea" id="RHEA:10932"/>
        <dbReference type="ChEBI" id="CHEBI:15378"/>
        <dbReference type="ChEBI" id="CHEBI:29991"/>
        <dbReference type="ChEBI" id="CHEBI:30616"/>
        <dbReference type="ChEBI" id="CHEBI:33019"/>
        <dbReference type="ChEBI" id="CHEBI:57472"/>
        <dbReference type="ChEBI" id="CHEBI:57743"/>
        <dbReference type="ChEBI" id="CHEBI:456215"/>
        <dbReference type="EC" id="6.3.4.5"/>
    </reaction>
</comment>
<comment type="pathway">
    <text evidence="1">Amino-acid biosynthesis; L-arginine biosynthesis; L-arginine from L-ornithine and carbamoyl phosphate: step 2/3.</text>
</comment>
<comment type="subunit">
    <text evidence="1">Homotetramer.</text>
</comment>
<comment type="subcellular location">
    <subcellularLocation>
        <location evidence="1">Cytoplasm</location>
    </subcellularLocation>
</comment>
<comment type="similarity">
    <text evidence="1">Belongs to the argininosuccinate synthase family. Type 1 subfamily.</text>
</comment>
<evidence type="ECO:0000255" key="1">
    <source>
        <dbReference type="HAMAP-Rule" id="MF_00005"/>
    </source>
</evidence>
<name>ASSY_CLOTE</name>
<reference key="1">
    <citation type="journal article" date="2003" name="Proc. Natl. Acad. Sci. U.S.A.">
        <title>The genome sequence of Clostridium tetani, the causative agent of tetanus disease.</title>
        <authorList>
            <person name="Brueggemann H."/>
            <person name="Baeumer S."/>
            <person name="Fricke W.F."/>
            <person name="Wiezer A."/>
            <person name="Liesegang H."/>
            <person name="Decker I."/>
            <person name="Herzberg C."/>
            <person name="Martinez-Arias R."/>
            <person name="Merkl R."/>
            <person name="Henne A."/>
            <person name="Gottschalk G."/>
        </authorList>
    </citation>
    <scope>NUCLEOTIDE SEQUENCE [LARGE SCALE GENOMIC DNA]</scope>
    <source>
        <strain>Massachusetts / E88</strain>
    </source>
</reference>
<sequence length="398" mass="44419">MTKEKVVLAYSGGLDTSIIIPWLKENYDLDVIAVCIDVGQDDDMEEVKKKAIKTGAVKVYVEDAKEEFVKDYVFKALKANALYEEKYMLGTSLARPLMAKKLVEIAHKEGAKYICHGCTGKGNDQVRFEVGIASFDPSIKIIAPWRIWDIKSREDAIDYAKEKGVEVPVTKKKIYSVDKNILHTSHEGGELEDPKNAHNKEMYSMVTPPEKAKDEPTYVDIYFNKGVPEKINGKEISPVELLNTLNKIGGENGVGVVDIVENRLVGMKSRGVYETPGGTILYEAHKDLESLTLDKLTLHCKQELAQKYGEIAYDGLWFTTLRESLDAFVDVTQENVTGTVKLKLYKGNIMNAGIDTKNALYDEGISSFGASELYSHKDAEGFIKLFSLPSKIKALKNK</sequence>
<keyword id="KW-0028">Amino-acid biosynthesis</keyword>
<keyword id="KW-0055">Arginine biosynthesis</keyword>
<keyword id="KW-0067">ATP-binding</keyword>
<keyword id="KW-0963">Cytoplasm</keyword>
<keyword id="KW-0436">Ligase</keyword>
<keyword id="KW-0547">Nucleotide-binding</keyword>
<keyword id="KW-1185">Reference proteome</keyword>
<accession>P59602</accession>
<feature type="chain" id="PRO_0000148587" description="Argininosuccinate synthase">
    <location>
        <begin position="1"/>
        <end position="398"/>
    </location>
</feature>
<feature type="binding site" evidence="1">
    <location>
        <begin position="9"/>
        <end position="17"/>
    </location>
    <ligand>
        <name>ATP</name>
        <dbReference type="ChEBI" id="CHEBI:30616"/>
    </ligand>
</feature>
<feature type="binding site" evidence="1">
    <location>
        <position position="87"/>
    </location>
    <ligand>
        <name>L-citrulline</name>
        <dbReference type="ChEBI" id="CHEBI:57743"/>
    </ligand>
</feature>
<feature type="binding site" evidence="1">
    <location>
        <position position="92"/>
    </location>
    <ligand>
        <name>L-citrulline</name>
        <dbReference type="ChEBI" id="CHEBI:57743"/>
    </ligand>
</feature>
<feature type="binding site" evidence="1">
    <location>
        <position position="117"/>
    </location>
    <ligand>
        <name>ATP</name>
        <dbReference type="ChEBI" id="CHEBI:30616"/>
    </ligand>
</feature>
<feature type="binding site" evidence="1">
    <location>
        <position position="119"/>
    </location>
    <ligand>
        <name>L-aspartate</name>
        <dbReference type="ChEBI" id="CHEBI:29991"/>
    </ligand>
</feature>
<feature type="binding site" evidence="1">
    <location>
        <position position="123"/>
    </location>
    <ligand>
        <name>L-aspartate</name>
        <dbReference type="ChEBI" id="CHEBI:29991"/>
    </ligand>
</feature>
<feature type="binding site" evidence="1">
    <location>
        <position position="123"/>
    </location>
    <ligand>
        <name>L-citrulline</name>
        <dbReference type="ChEBI" id="CHEBI:57743"/>
    </ligand>
</feature>
<feature type="binding site" evidence="1">
    <location>
        <position position="124"/>
    </location>
    <ligand>
        <name>L-aspartate</name>
        <dbReference type="ChEBI" id="CHEBI:29991"/>
    </ligand>
</feature>
<feature type="binding site" evidence="1">
    <location>
        <position position="127"/>
    </location>
    <ligand>
        <name>L-citrulline</name>
        <dbReference type="ChEBI" id="CHEBI:57743"/>
    </ligand>
</feature>
<feature type="binding site" evidence="1">
    <location>
        <position position="176"/>
    </location>
    <ligand>
        <name>L-citrulline</name>
        <dbReference type="ChEBI" id="CHEBI:57743"/>
    </ligand>
</feature>
<feature type="binding site" evidence="1">
    <location>
        <position position="185"/>
    </location>
    <ligand>
        <name>L-citrulline</name>
        <dbReference type="ChEBI" id="CHEBI:57743"/>
    </ligand>
</feature>
<feature type="binding site" evidence="1">
    <location>
        <position position="261"/>
    </location>
    <ligand>
        <name>L-citrulline</name>
        <dbReference type="ChEBI" id="CHEBI:57743"/>
    </ligand>
</feature>
<feature type="binding site" evidence="1">
    <location>
        <position position="273"/>
    </location>
    <ligand>
        <name>L-citrulline</name>
        <dbReference type="ChEBI" id="CHEBI:57743"/>
    </ligand>
</feature>